<organism>
    <name type="scientific">Bordetella parapertussis (strain 12822 / ATCC BAA-587 / NCTC 13253)</name>
    <dbReference type="NCBI Taxonomy" id="257311"/>
    <lineage>
        <taxon>Bacteria</taxon>
        <taxon>Pseudomonadati</taxon>
        <taxon>Pseudomonadota</taxon>
        <taxon>Betaproteobacteria</taxon>
        <taxon>Burkholderiales</taxon>
        <taxon>Alcaligenaceae</taxon>
        <taxon>Bordetella</taxon>
    </lineage>
</organism>
<comment type="function">
    <text evidence="1">Associates with the EF-Tu.GDP complex and induces the exchange of GDP to GTP. It remains bound to the aminoacyl-tRNA.EF-Tu.GTP complex up to the GTP hydrolysis stage on the ribosome.</text>
</comment>
<comment type="subcellular location">
    <subcellularLocation>
        <location evidence="1">Cytoplasm</location>
    </subcellularLocation>
</comment>
<comment type="similarity">
    <text evidence="1">Belongs to the EF-Ts family.</text>
</comment>
<comment type="sequence caution" evidence="2">
    <conflict type="erroneous initiation">
        <sequence resource="EMBL-CDS" id="CAE36830"/>
    </conflict>
</comment>
<feature type="chain" id="PRO_0000161087" description="Elongation factor Ts">
    <location>
        <begin position="1"/>
        <end position="292"/>
    </location>
</feature>
<feature type="region of interest" description="Involved in Mg(2+) ion dislocation from EF-Tu" evidence="1">
    <location>
        <begin position="82"/>
        <end position="85"/>
    </location>
</feature>
<keyword id="KW-0963">Cytoplasm</keyword>
<keyword id="KW-0251">Elongation factor</keyword>
<keyword id="KW-0648">Protein biosynthesis</keyword>
<evidence type="ECO:0000255" key="1">
    <source>
        <dbReference type="HAMAP-Rule" id="MF_00050"/>
    </source>
</evidence>
<evidence type="ECO:0000305" key="2"/>
<sequence length="292" mass="30890">MAEITAALVKELREKTDAPMMECKKALTEAEGDLARAEEILRVKLGNKASKAAARVTAEGLIGLYIAADGKQGAVIEVNCETDFVAKNTDFIDFINKLAELVATQNPGDVAALSALPFGEGTVETTRTALVGKIGENISVRRFERIQTPNSLASYVHGGKIGVLVEFSGAEEVGKDLAMHIAATKPKALNADGVNAEDIAAERSVAEQKAAESGKPAEIVAKMVEGSVQKFLKEVTLLSQPFVKNDKQTIEQMLKEKGASITKFVLFVVGEGIEKKTADFASEVAAAAAGRA</sequence>
<dbReference type="EMBL" id="BX640427">
    <property type="protein sequence ID" value="CAE36830.1"/>
    <property type="status" value="ALT_INIT"/>
    <property type="molecule type" value="Genomic_DNA"/>
</dbReference>
<dbReference type="RefSeq" id="WP_010928078.1">
    <property type="nucleotide sequence ID" value="NC_002928.3"/>
</dbReference>
<dbReference type="SMR" id="Q7WA59"/>
<dbReference type="GeneID" id="93203287"/>
<dbReference type="KEGG" id="bpa:BPP1528"/>
<dbReference type="HOGENOM" id="CLU_047155_0_2_4"/>
<dbReference type="Proteomes" id="UP000001421">
    <property type="component" value="Chromosome"/>
</dbReference>
<dbReference type="GO" id="GO:0005737">
    <property type="term" value="C:cytoplasm"/>
    <property type="evidence" value="ECO:0007669"/>
    <property type="project" value="UniProtKB-SubCell"/>
</dbReference>
<dbReference type="GO" id="GO:0003746">
    <property type="term" value="F:translation elongation factor activity"/>
    <property type="evidence" value="ECO:0007669"/>
    <property type="project" value="UniProtKB-UniRule"/>
</dbReference>
<dbReference type="CDD" id="cd14275">
    <property type="entry name" value="UBA_EF-Ts"/>
    <property type="match status" value="1"/>
</dbReference>
<dbReference type="FunFam" id="1.10.286.20:FF:000001">
    <property type="entry name" value="Elongation factor Ts"/>
    <property type="match status" value="1"/>
</dbReference>
<dbReference type="FunFam" id="1.10.8.10:FF:000001">
    <property type="entry name" value="Elongation factor Ts"/>
    <property type="match status" value="1"/>
</dbReference>
<dbReference type="Gene3D" id="1.10.286.20">
    <property type="match status" value="1"/>
</dbReference>
<dbReference type="Gene3D" id="1.10.8.10">
    <property type="entry name" value="DNA helicase RuvA subunit, C-terminal domain"/>
    <property type="match status" value="1"/>
</dbReference>
<dbReference type="Gene3D" id="3.30.479.20">
    <property type="entry name" value="Elongation factor Ts, dimerisation domain"/>
    <property type="match status" value="2"/>
</dbReference>
<dbReference type="HAMAP" id="MF_00050">
    <property type="entry name" value="EF_Ts"/>
    <property type="match status" value="1"/>
</dbReference>
<dbReference type="InterPro" id="IPR036402">
    <property type="entry name" value="EF-Ts_dimer_sf"/>
</dbReference>
<dbReference type="InterPro" id="IPR001816">
    <property type="entry name" value="Transl_elong_EFTs/EF1B"/>
</dbReference>
<dbReference type="InterPro" id="IPR014039">
    <property type="entry name" value="Transl_elong_EFTs/EF1B_dimer"/>
</dbReference>
<dbReference type="InterPro" id="IPR018101">
    <property type="entry name" value="Transl_elong_Ts_CS"/>
</dbReference>
<dbReference type="InterPro" id="IPR009060">
    <property type="entry name" value="UBA-like_sf"/>
</dbReference>
<dbReference type="NCBIfam" id="TIGR00116">
    <property type="entry name" value="tsf"/>
    <property type="match status" value="1"/>
</dbReference>
<dbReference type="PANTHER" id="PTHR11741">
    <property type="entry name" value="ELONGATION FACTOR TS"/>
    <property type="match status" value="1"/>
</dbReference>
<dbReference type="PANTHER" id="PTHR11741:SF0">
    <property type="entry name" value="ELONGATION FACTOR TS, MITOCHONDRIAL"/>
    <property type="match status" value="1"/>
</dbReference>
<dbReference type="Pfam" id="PF00889">
    <property type="entry name" value="EF_TS"/>
    <property type="match status" value="1"/>
</dbReference>
<dbReference type="SUPFAM" id="SSF54713">
    <property type="entry name" value="Elongation factor Ts (EF-Ts), dimerisation domain"/>
    <property type="match status" value="2"/>
</dbReference>
<dbReference type="SUPFAM" id="SSF46934">
    <property type="entry name" value="UBA-like"/>
    <property type="match status" value="1"/>
</dbReference>
<dbReference type="PROSITE" id="PS01127">
    <property type="entry name" value="EF_TS_2"/>
    <property type="match status" value="1"/>
</dbReference>
<proteinExistence type="inferred from homology"/>
<name>EFTS_BORPA</name>
<reference key="1">
    <citation type="journal article" date="2003" name="Nat. Genet.">
        <title>Comparative analysis of the genome sequences of Bordetella pertussis, Bordetella parapertussis and Bordetella bronchiseptica.</title>
        <authorList>
            <person name="Parkhill J."/>
            <person name="Sebaihia M."/>
            <person name="Preston A."/>
            <person name="Murphy L.D."/>
            <person name="Thomson N.R."/>
            <person name="Harris D.E."/>
            <person name="Holden M.T.G."/>
            <person name="Churcher C.M."/>
            <person name="Bentley S.D."/>
            <person name="Mungall K.L."/>
            <person name="Cerdeno-Tarraga A.-M."/>
            <person name="Temple L."/>
            <person name="James K.D."/>
            <person name="Harris B."/>
            <person name="Quail M.A."/>
            <person name="Achtman M."/>
            <person name="Atkin R."/>
            <person name="Baker S."/>
            <person name="Basham D."/>
            <person name="Bason N."/>
            <person name="Cherevach I."/>
            <person name="Chillingworth T."/>
            <person name="Collins M."/>
            <person name="Cronin A."/>
            <person name="Davis P."/>
            <person name="Doggett J."/>
            <person name="Feltwell T."/>
            <person name="Goble A."/>
            <person name="Hamlin N."/>
            <person name="Hauser H."/>
            <person name="Holroyd S."/>
            <person name="Jagels K."/>
            <person name="Leather S."/>
            <person name="Moule S."/>
            <person name="Norberczak H."/>
            <person name="O'Neil S."/>
            <person name="Ormond D."/>
            <person name="Price C."/>
            <person name="Rabbinowitsch E."/>
            <person name="Rutter S."/>
            <person name="Sanders M."/>
            <person name="Saunders D."/>
            <person name="Seeger K."/>
            <person name="Sharp S."/>
            <person name="Simmonds M."/>
            <person name="Skelton J."/>
            <person name="Squares R."/>
            <person name="Squares S."/>
            <person name="Stevens K."/>
            <person name="Unwin L."/>
            <person name="Whitehead S."/>
            <person name="Barrell B.G."/>
            <person name="Maskell D.J."/>
        </authorList>
    </citation>
    <scope>NUCLEOTIDE SEQUENCE [LARGE SCALE GENOMIC DNA]</scope>
    <source>
        <strain>12822 / ATCC BAA-587 / NCTC 13253</strain>
    </source>
</reference>
<gene>
    <name evidence="1" type="primary">tsf</name>
    <name type="ordered locus">BPP1528</name>
</gene>
<accession>Q7WA59</accession>
<protein>
    <recommendedName>
        <fullName evidence="1">Elongation factor Ts</fullName>
        <shortName evidence="1">EF-Ts</shortName>
    </recommendedName>
</protein>